<protein>
    <recommendedName>
        <fullName>Porin Omp2a</fullName>
    </recommendedName>
</protein>
<gene>
    <name type="primary">omp2a</name>
    <name type="ordered locus">BCAN_A0651</name>
</gene>
<accession>A9MA14</accession>
<keyword id="KW-0998">Cell outer membrane</keyword>
<keyword id="KW-0406">Ion transport</keyword>
<keyword id="KW-0472">Membrane</keyword>
<keyword id="KW-0626">Porin</keyword>
<keyword id="KW-1185">Reference proteome</keyword>
<keyword id="KW-0732">Signal</keyword>
<keyword id="KW-0812">Transmembrane</keyword>
<keyword id="KW-1134">Transmembrane beta strand</keyword>
<keyword id="KW-0813">Transport</keyword>
<sequence length="367" mass="39478">MNIKSLLLGSAAALVAASGAQAADAIVAPEPEAVEYVRVCDAYGAGYFYIPGTETCLRVHGYVRYDVKGGDDVYTGSDRKGWDKGARFALMFNTNSETELGTLGTYTQLRFNYTSNNSRHDGQYGDFSDDRDVADGGVSTGTDLQFAYITLGGFKVGIDESEFHTFTGYLGDVINDDVVAAGSYRTGKIAYTFTGGNGFSAVIALEQGGEDVDNDYTIDGYMPHVVGGLKYAGGWGSIAGAVAYDPVIEEWATKVRGDVNITDRFSVWLQGAYSSAATPNQNYGQWGGDWAVWGGAKFIATEKATFNLQAAHDDWGKTAVTANVAYQLVPGFTITPEVSYTKFGGEWKDTVAEDNAWGGIVRFQRSF</sequence>
<comment type="function">
    <text evidence="1">Forms passive diffusion pores that allow small molecular weight hydrophilic materials across the outer membrane.</text>
</comment>
<comment type="subunit">
    <text evidence="1">Monomer.</text>
</comment>
<comment type="subcellular location">
    <subcellularLocation>
        <location evidence="1">Cell outer membrane</location>
        <topology evidence="1">Multi-pass membrane protein</topology>
    </subcellularLocation>
</comment>
<comment type="domain">
    <text evidence="1">Consists of 16-stranded beta-barrel sheets, with large surface-exposed loops, that form a transmembrane pore at the center of each barrel. The pore is partially ocluded by a peptide loop that folds into the pore lumen.</text>
</comment>
<comment type="miscellaneous">
    <text evidence="1">The pore formed by Omp2a is larger than the one formed by Omp2b. Omp2b pores have optimal permeability to allow growth and protection against harmful compounds. The larger pore formed by Omp2a may be advantageous for intracellular growth, when the bacterium is competing with the host cell for nutrients whose concentration is particularly low within the phagosome.</text>
</comment>
<comment type="similarity">
    <text evidence="3">Belongs to the alphaproteobacteria porin family.</text>
</comment>
<dbReference type="EMBL" id="CP000872">
    <property type="protein sequence ID" value="ABX61726.1"/>
    <property type="molecule type" value="Genomic_DNA"/>
</dbReference>
<dbReference type="RefSeq" id="WP_006132438.1">
    <property type="nucleotide sequence ID" value="NC_010103.1"/>
</dbReference>
<dbReference type="SMR" id="A9MA14"/>
<dbReference type="GeneID" id="55590366"/>
<dbReference type="KEGG" id="bcs:BCAN_A0651"/>
<dbReference type="HOGENOM" id="CLU_044836_0_0_5"/>
<dbReference type="PhylomeDB" id="A9MA14"/>
<dbReference type="Proteomes" id="UP000001385">
    <property type="component" value="Chromosome I"/>
</dbReference>
<dbReference type="GO" id="GO:0009279">
    <property type="term" value="C:cell outer membrane"/>
    <property type="evidence" value="ECO:0007669"/>
    <property type="project" value="UniProtKB-SubCell"/>
</dbReference>
<dbReference type="GO" id="GO:0046930">
    <property type="term" value="C:pore complex"/>
    <property type="evidence" value="ECO:0007669"/>
    <property type="project" value="UniProtKB-KW"/>
</dbReference>
<dbReference type="GO" id="GO:0015288">
    <property type="term" value="F:porin activity"/>
    <property type="evidence" value="ECO:0007669"/>
    <property type="project" value="UniProtKB-KW"/>
</dbReference>
<dbReference type="GO" id="GO:0006811">
    <property type="term" value="P:monoatomic ion transport"/>
    <property type="evidence" value="ECO:0007669"/>
    <property type="project" value="UniProtKB-KW"/>
</dbReference>
<dbReference type="InterPro" id="IPR003684">
    <property type="entry name" value="Porin_alphabac"/>
</dbReference>
<dbReference type="Pfam" id="PF02530">
    <property type="entry name" value="Porin_2"/>
    <property type="match status" value="1"/>
</dbReference>
<dbReference type="SUPFAM" id="SSF56935">
    <property type="entry name" value="Porins"/>
    <property type="match status" value="1"/>
</dbReference>
<feature type="signal peptide" evidence="2">
    <location>
        <begin position="1"/>
        <end position="22"/>
    </location>
</feature>
<feature type="chain" id="PRO_0000354009" description="Porin Omp2a">
    <location>
        <begin position="23"/>
        <end position="367"/>
    </location>
</feature>
<proteinExistence type="inferred from homology"/>
<evidence type="ECO:0000250" key="1">
    <source>
        <dbReference type="UniProtKB" id="B2SAB9"/>
    </source>
</evidence>
<evidence type="ECO:0000255" key="2"/>
<evidence type="ECO:0000305" key="3"/>
<reference key="1">
    <citation type="submission" date="2007-10" db="EMBL/GenBank/DDBJ databases">
        <title>Brucella canis ATCC 23365 whole genome shotgun sequencing project.</title>
        <authorList>
            <person name="Setubal J.C."/>
            <person name="Bowns C."/>
            <person name="Boyle S."/>
            <person name="Crasta O.R."/>
            <person name="Czar M.J."/>
            <person name="Dharmanolla C."/>
            <person name="Gillespie J.J."/>
            <person name="Kenyon R.W."/>
            <person name="Lu J."/>
            <person name="Mane S."/>
            <person name="Mohapatra S."/>
            <person name="Nagrani S."/>
            <person name="Purkayastha A."/>
            <person name="Rajasimha H.K."/>
            <person name="Shallom J.M."/>
            <person name="Shallom S."/>
            <person name="Shukla M."/>
            <person name="Snyder E.E."/>
            <person name="Sobral B.W."/>
            <person name="Wattam A.R."/>
            <person name="Will R."/>
            <person name="Williams K."/>
            <person name="Yoo H."/>
            <person name="Bruce D."/>
            <person name="Detter C."/>
            <person name="Munk C."/>
            <person name="Brettin T.S."/>
        </authorList>
    </citation>
    <scope>NUCLEOTIDE SEQUENCE [LARGE SCALE GENOMIC DNA]</scope>
    <source>
        <strain>ATCC 23365 / NCTC 10854 / RM-666</strain>
    </source>
</reference>
<organism>
    <name type="scientific">Brucella canis (strain ATCC 23365 / NCTC 10854 / RM-666)</name>
    <dbReference type="NCBI Taxonomy" id="483179"/>
    <lineage>
        <taxon>Bacteria</taxon>
        <taxon>Pseudomonadati</taxon>
        <taxon>Pseudomonadota</taxon>
        <taxon>Alphaproteobacteria</taxon>
        <taxon>Hyphomicrobiales</taxon>
        <taxon>Brucellaceae</taxon>
        <taxon>Brucella/Ochrobactrum group</taxon>
        <taxon>Brucella</taxon>
    </lineage>
</organism>
<name>OMP2A_BRUC2</name>